<accession>P0AB23</accession>
<accession>P75875</accession>
<proteinExistence type="inferred from homology"/>
<feature type="chain" id="PRO_0000168798" description="Heat shock protein HspQ">
    <location>
        <begin position="1"/>
        <end position="105"/>
    </location>
</feature>
<feature type="region of interest" description="Disordered" evidence="2">
    <location>
        <begin position="75"/>
        <end position="105"/>
    </location>
</feature>
<protein>
    <recommendedName>
        <fullName evidence="1">Heat shock protein HspQ</fullName>
    </recommendedName>
</protein>
<evidence type="ECO:0000255" key="1">
    <source>
        <dbReference type="HAMAP-Rule" id="MF_01194"/>
    </source>
</evidence>
<evidence type="ECO:0000256" key="2">
    <source>
        <dbReference type="SAM" id="MobiDB-lite"/>
    </source>
</evidence>
<evidence type="ECO:0000305" key="3"/>
<organism>
    <name type="scientific">Shigella flexneri</name>
    <dbReference type="NCBI Taxonomy" id="623"/>
    <lineage>
        <taxon>Bacteria</taxon>
        <taxon>Pseudomonadati</taxon>
        <taxon>Pseudomonadota</taxon>
        <taxon>Gammaproteobacteria</taxon>
        <taxon>Enterobacterales</taxon>
        <taxon>Enterobacteriaceae</taxon>
        <taxon>Shigella</taxon>
    </lineage>
</organism>
<comment type="function">
    <text evidence="1">Involved in the degradation of certain denaturated proteins, including DnaA, during heat shock stress.</text>
</comment>
<comment type="subcellular location">
    <subcellularLocation>
        <location evidence="1">Cytoplasm</location>
    </subcellularLocation>
</comment>
<comment type="similarity">
    <text evidence="1">Belongs to the HspQ family.</text>
</comment>
<comment type="sequence caution" evidence="3">
    <conflict type="erroneous initiation">
        <sequence resource="EMBL-CDS" id="AAN42596"/>
    </conflict>
</comment>
<comment type="sequence caution" evidence="3">
    <conflict type="erroneous initiation">
        <sequence resource="EMBL-CDS" id="AAP16482"/>
    </conflict>
</comment>
<dbReference type="EMBL" id="AE005674">
    <property type="protein sequence ID" value="AAN42596.1"/>
    <property type="status" value="ALT_INIT"/>
    <property type="molecule type" value="Genomic_DNA"/>
</dbReference>
<dbReference type="EMBL" id="AE014073">
    <property type="protein sequence ID" value="AAP16482.1"/>
    <property type="status" value="ALT_INIT"/>
    <property type="molecule type" value="Genomic_DNA"/>
</dbReference>
<dbReference type="RefSeq" id="WP_001295356.1">
    <property type="nucleotide sequence ID" value="NZ_WPGW01000043.1"/>
</dbReference>
<dbReference type="SMR" id="P0AB23"/>
<dbReference type="STRING" id="198214.SF0968"/>
<dbReference type="PaxDb" id="198214-SF0968"/>
<dbReference type="GeneID" id="93776448"/>
<dbReference type="KEGG" id="sfl:SF0968"/>
<dbReference type="KEGG" id="sfx:S1034"/>
<dbReference type="PATRIC" id="fig|198214.7.peg.1127"/>
<dbReference type="HOGENOM" id="CLU_123865_1_0_6"/>
<dbReference type="Proteomes" id="UP000001006">
    <property type="component" value="Chromosome"/>
</dbReference>
<dbReference type="Proteomes" id="UP000002673">
    <property type="component" value="Chromosome"/>
</dbReference>
<dbReference type="GO" id="GO:0005737">
    <property type="term" value="C:cytoplasm"/>
    <property type="evidence" value="ECO:0007669"/>
    <property type="project" value="UniProtKB-SubCell"/>
</dbReference>
<dbReference type="GO" id="GO:0003677">
    <property type="term" value="F:DNA binding"/>
    <property type="evidence" value="ECO:0007669"/>
    <property type="project" value="InterPro"/>
</dbReference>
<dbReference type="GO" id="GO:0009408">
    <property type="term" value="P:response to heat"/>
    <property type="evidence" value="ECO:0007669"/>
    <property type="project" value="UniProtKB-UniRule"/>
</dbReference>
<dbReference type="Gene3D" id="2.30.30.390">
    <property type="entry name" value="Hemimethylated DNA-binding domain"/>
    <property type="match status" value="1"/>
</dbReference>
<dbReference type="HAMAP" id="MF_01194">
    <property type="entry name" value="HspQ"/>
    <property type="match status" value="1"/>
</dbReference>
<dbReference type="InterPro" id="IPR011722">
    <property type="entry name" value="Hemimethylated_DNA-bd_dom"/>
</dbReference>
<dbReference type="InterPro" id="IPR036623">
    <property type="entry name" value="Hemimethylated_DNA-bd_sf"/>
</dbReference>
<dbReference type="InterPro" id="IPR022866">
    <property type="entry name" value="HspQ"/>
</dbReference>
<dbReference type="NCBIfam" id="NF010729">
    <property type="entry name" value="PRK14129.1"/>
    <property type="match status" value="1"/>
</dbReference>
<dbReference type="NCBIfam" id="TIGR02097">
    <property type="entry name" value="yccV"/>
    <property type="match status" value="1"/>
</dbReference>
<dbReference type="Pfam" id="PF08755">
    <property type="entry name" value="YccV-like"/>
    <property type="match status" value="1"/>
</dbReference>
<dbReference type="SMART" id="SM00992">
    <property type="entry name" value="YccV-like"/>
    <property type="match status" value="1"/>
</dbReference>
<dbReference type="SUPFAM" id="SSF141255">
    <property type="entry name" value="YccV-like"/>
    <property type="match status" value="1"/>
</dbReference>
<keyword id="KW-0963">Cytoplasm</keyword>
<keyword id="KW-1185">Reference proteome</keyword>
<keyword id="KW-0346">Stress response</keyword>
<name>HSPQ_SHIFL</name>
<reference key="1">
    <citation type="journal article" date="2002" name="Nucleic Acids Res.">
        <title>Genome sequence of Shigella flexneri 2a: insights into pathogenicity through comparison with genomes of Escherichia coli K12 and O157.</title>
        <authorList>
            <person name="Jin Q."/>
            <person name="Yuan Z."/>
            <person name="Xu J."/>
            <person name="Wang Y."/>
            <person name="Shen Y."/>
            <person name="Lu W."/>
            <person name="Wang J."/>
            <person name="Liu H."/>
            <person name="Yang J."/>
            <person name="Yang F."/>
            <person name="Zhang X."/>
            <person name="Zhang J."/>
            <person name="Yang G."/>
            <person name="Wu H."/>
            <person name="Qu D."/>
            <person name="Dong J."/>
            <person name="Sun L."/>
            <person name="Xue Y."/>
            <person name="Zhao A."/>
            <person name="Gao Y."/>
            <person name="Zhu J."/>
            <person name="Kan B."/>
            <person name="Ding K."/>
            <person name="Chen S."/>
            <person name="Cheng H."/>
            <person name="Yao Z."/>
            <person name="He B."/>
            <person name="Chen R."/>
            <person name="Ma D."/>
            <person name="Qiang B."/>
            <person name="Wen Y."/>
            <person name="Hou Y."/>
            <person name="Yu J."/>
        </authorList>
    </citation>
    <scope>NUCLEOTIDE SEQUENCE [LARGE SCALE GENOMIC DNA]</scope>
    <source>
        <strain>301 / Serotype 2a</strain>
    </source>
</reference>
<reference key="2">
    <citation type="journal article" date="2003" name="Infect. Immun.">
        <title>Complete genome sequence and comparative genomics of Shigella flexneri serotype 2a strain 2457T.</title>
        <authorList>
            <person name="Wei J."/>
            <person name="Goldberg M.B."/>
            <person name="Burland V."/>
            <person name="Venkatesan M.M."/>
            <person name="Deng W."/>
            <person name="Fournier G."/>
            <person name="Mayhew G.F."/>
            <person name="Plunkett G. III"/>
            <person name="Rose D.J."/>
            <person name="Darling A."/>
            <person name="Mau B."/>
            <person name="Perna N.T."/>
            <person name="Payne S.M."/>
            <person name="Runyen-Janecky L.J."/>
            <person name="Zhou S."/>
            <person name="Schwartz D.C."/>
            <person name="Blattner F.R."/>
        </authorList>
    </citation>
    <scope>NUCLEOTIDE SEQUENCE [LARGE SCALE GENOMIC DNA]</scope>
    <source>
        <strain>ATCC 700930 / 2457T / Serotype 2a</strain>
    </source>
</reference>
<gene>
    <name evidence="1" type="primary">hspQ</name>
    <name type="ordered locus">SF0968</name>
    <name type="ordered locus">S1034</name>
</gene>
<sequence length="105" mass="11779">MIASKFGIGQQVRHSLLGYLGVVVDIDPVYSLSEPSPDELAVNDELRAAPWYHVVMEDDNGLPVHTYLAEAQLSSELQDEHPEQPSMDELAQTIRKQLQAPRLRN</sequence>